<accession>A4DA05</accession>
<reference key="1">
    <citation type="journal article" date="2005" name="Nature">
        <title>Genomic sequence of the pathogenic and allergenic filamentous fungus Aspergillus fumigatus.</title>
        <authorList>
            <person name="Nierman W.C."/>
            <person name="Pain A."/>
            <person name="Anderson M.J."/>
            <person name="Wortman J.R."/>
            <person name="Kim H.S."/>
            <person name="Arroyo J."/>
            <person name="Berriman M."/>
            <person name="Abe K."/>
            <person name="Archer D.B."/>
            <person name="Bermejo C."/>
            <person name="Bennett J.W."/>
            <person name="Bowyer P."/>
            <person name="Chen D."/>
            <person name="Collins M."/>
            <person name="Coulsen R."/>
            <person name="Davies R."/>
            <person name="Dyer P.S."/>
            <person name="Farman M.L."/>
            <person name="Fedorova N."/>
            <person name="Fedorova N.D."/>
            <person name="Feldblyum T.V."/>
            <person name="Fischer R."/>
            <person name="Fosker N."/>
            <person name="Fraser A."/>
            <person name="Garcia J.L."/>
            <person name="Garcia M.J."/>
            <person name="Goble A."/>
            <person name="Goldman G.H."/>
            <person name="Gomi K."/>
            <person name="Griffith-Jones S."/>
            <person name="Gwilliam R."/>
            <person name="Haas B.J."/>
            <person name="Haas H."/>
            <person name="Harris D.E."/>
            <person name="Horiuchi H."/>
            <person name="Huang J."/>
            <person name="Humphray S."/>
            <person name="Jimenez J."/>
            <person name="Keller N."/>
            <person name="Khouri H."/>
            <person name="Kitamoto K."/>
            <person name="Kobayashi T."/>
            <person name="Konzack S."/>
            <person name="Kulkarni R."/>
            <person name="Kumagai T."/>
            <person name="Lafton A."/>
            <person name="Latge J.-P."/>
            <person name="Li W."/>
            <person name="Lord A."/>
            <person name="Lu C."/>
            <person name="Majoros W.H."/>
            <person name="May G.S."/>
            <person name="Miller B.L."/>
            <person name="Mohamoud Y."/>
            <person name="Molina M."/>
            <person name="Monod M."/>
            <person name="Mouyna I."/>
            <person name="Mulligan S."/>
            <person name="Murphy L.D."/>
            <person name="O'Neil S."/>
            <person name="Paulsen I."/>
            <person name="Penalva M.A."/>
            <person name="Pertea M."/>
            <person name="Price C."/>
            <person name="Pritchard B.L."/>
            <person name="Quail M.A."/>
            <person name="Rabbinowitsch E."/>
            <person name="Rawlins N."/>
            <person name="Rajandream M.A."/>
            <person name="Reichard U."/>
            <person name="Renauld H."/>
            <person name="Robson G.D."/>
            <person name="Rodriguez de Cordoba S."/>
            <person name="Rodriguez-Pena J.M."/>
            <person name="Ronning C.M."/>
            <person name="Rutter S."/>
            <person name="Salzberg S.L."/>
            <person name="Sanchez M."/>
            <person name="Sanchez-Ferrero J.C."/>
            <person name="Saunders D."/>
            <person name="Seeger K."/>
            <person name="Squares R."/>
            <person name="Squares S."/>
            <person name="Takeuchi M."/>
            <person name="Tekaia F."/>
            <person name="Turner G."/>
            <person name="Vazquez de Aldana C.R."/>
            <person name="Weidman J."/>
            <person name="White O."/>
            <person name="Woodward J.R."/>
            <person name="Yu J.-H."/>
            <person name="Fraser C.M."/>
            <person name="Galagan J.E."/>
            <person name="Asai K."/>
            <person name="Machida M."/>
            <person name="Hall N."/>
            <person name="Barrell B.G."/>
            <person name="Denning D.W."/>
        </authorList>
    </citation>
    <scope>NUCLEOTIDE SEQUENCE [LARGE SCALE GENOMIC DNA]</scope>
    <source>
        <strain>ATCC MYA-4609 / CBS 101355 / FGSC A1100 / Af293</strain>
    </source>
</reference>
<reference key="2">
    <citation type="journal article" date="2018" name="MBio">
        <title>Fungal isocyanide synthases and xanthocillin biosynthesis in Aspergillus fumigatus.</title>
        <authorList>
            <person name="Lim F.Y."/>
            <person name="Won T.H."/>
            <person name="Raffa N."/>
            <person name="Baccile J.A."/>
            <person name="Wisecaver J."/>
            <person name="Rokas A."/>
            <person name="Schroeder F.C."/>
            <person name="Keller N.P."/>
        </authorList>
    </citation>
    <scope>FUNCTION</scope>
    <scope>INDUCTION</scope>
    <scope>DISRUPTION PHENOTYPE</scope>
</reference>
<gene>
    <name evidence="4" type="primary">xanC</name>
    <name type="ORF">AFUA_5G02655</name>
</gene>
<name>XANC_ASPFU</name>
<sequence>MHSQTTKDEQSKDDSSNEKQDAIERRRLQNRLSQRNHRRKIRDRIAKLQERVIASELRAVATLNGWDQASPPAASMMESKPQGDFDSNPLASVSEDPAISNPPQRNVSSNLCRSCCSLLNQMPSSSSLPSPTSPLPFDLGLTNGVDSTNSSPSTLLNSSPSSSQLSPFSLDTSLSMTGLQSQNEFSFPPYPDPPGSQQYPHCPQYYVATEASLPHIMQRLGSATSHPKAIILIPHGHGYAPAPFTGANAADSTGLRSALNGNLNLQNPGRHCLRPDRSAKSSDLGTSGDWMTAPSSTPFCPLHPSQSSSLDNYQSMML</sequence>
<comment type="function">
    <text evidence="3">Transcription regulator that specifically up-regulates the gene cluster that mediates the biosynthesis of the isocyanide xanthocillin and its derivatives.</text>
</comment>
<comment type="subcellular location">
    <subcellularLocation>
        <location evidence="1">Nucleus</location>
    </subcellularLocation>
</comment>
<comment type="induction">
    <text evidence="3">Expressed during copper starvation via the regulation of both aceA and macA transcription factors.</text>
</comment>
<comment type="disruption phenotype">
    <text evidence="3">Virtually eliminates the production of all pathway metabolites, including fumiformamide, melanocin E, melanocin F, but also the sulfated xanthocillin derivative BU-4704 and xanthocillin X monomethyl ether.</text>
</comment>
<comment type="similarity">
    <text evidence="5">Belongs to the bZIP family.</text>
</comment>
<protein>
    <recommendedName>
        <fullName evidence="4">Xanthocillin biosynthesis cluster transcription factor xanC</fullName>
    </recommendedName>
    <alternativeName>
        <fullName evidence="4">Xanthocillin biosynthesis cluster protein C</fullName>
    </alternativeName>
</protein>
<proteinExistence type="evidence at transcript level"/>
<organism>
    <name type="scientific">Aspergillus fumigatus (strain ATCC MYA-4609 / CBS 101355 / FGSC A1100 / Af293)</name>
    <name type="common">Neosartorya fumigata</name>
    <dbReference type="NCBI Taxonomy" id="330879"/>
    <lineage>
        <taxon>Eukaryota</taxon>
        <taxon>Fungi</taxon>
        <taxon>Dikarya</taxon>
        <taxon>Ascomycota</taxon>
        <taxon>Pezizomycotina</taxon>
        <taxon>Eurotiomycetes</taxon>
        <taxon>Eurotiomycetidae</taxon>
        <taxon>Eurotiales</taxon>
        <taxon>Aspergillaceae</taxon>
        <taxon>Aspergillus</taxon>
        <taxon>Aspergillus subgen. Fumigati</taxon>
    </lineage>
</organism>
<feature type="chain" id="PRO_0000445296" description="Xanthocillin biosynthesis cluster transcription factor xanC">
    <location>
        <begin position="1"/>
        <end position="318"/>
    </location>
</feature>
<feature type="domain" description="bZIP" evidence="1">
    <location>
        <begin position="20"/>
        <end position="52"/>
    </location>
</feature>
<feature type="region of interest" description="Disordered" evidence="2">
    <location>
        <begin position="1"/>
        <end position="39"/>
    </location>
</feature>
<feature type="region of interest" description="Basic motif" evidence="1">
    <location>
        <begin position="25"/>
        <end position="40"/>
    </location>
</feature>
<feature type="region of interest" description="Leucine-zipper" evidence="1">
    <location>
        <begin position="41"/>
        <end position="48"/>
    </location>
</feature>
<feature type="region of interest" description="Disordered" evidence="2">
    <location>
        <begin position="71"/>
        <end position="107"/>
    </location>
</feature>
<feature type="region of interest" description="Disordered" evidence="2">
    <location>
        <begin position="123"/>
        <end position="171"/>
    </location>
</feature>
<feature type="region of interest" description="Disordered" evidence="2">
    <location>
        <begin position="269"/>
        <end position="318"/>
    </location>
</feature>
<feature type="compositionally biased region" description="Basic and acidic residues" evidence="2">
    <location>
        <begin position="1"/>
        <end position="27"/>
    </location>
</feature>
<feature type="compositionally biased region" description="Low complexity" evidence="2">
    <location>
        <begin position="123"/>
        <end position="139"/>
    </location>
</feature>
<feature type="compositionally biased region" description="Low complexity" evidence="2">
    <location>
        <begin position="147"/>
        <end position="171"/>
    </location>
</feature>
<feature type="compositionally biased region" description="Polar residues" evidence="2">
    <location>
        <begin position="293"/>
        <end position="318"/>
    </location>
</feature>
<keyword id="KW-0238">DNA-binding</keyword>
<keyword id="KW-0539">Nucleus</keyword>
<keyword id="KW-1185">Reference proteome</keyword>
<keyword id="KW-0804">Transcription</keyword>
<keyword id="KW-0805">Transcription regulation</keyword>
<dbReference type="EMBL" id="AAHF01000011">
    <property type="protein sequence ID" value="EBA27255.1"/>
    <property type="molecule type" value="Genomic_DNA"/>
</dbReference>
<dbReference type="RefSeq" id="XP_001481490.1">
    <property type="nucleotide sequence ID" value="XM_001481440.1"/>
</dbReference>
<dbReference type="SMR" id="A4DA05"/>
<dbReference type="STRING" id="330879.A4DA05"/>
<dbReference type="EnsemblFungi" id="EBA27255">
    <property type="protein sequence ID" value="EBA27255"/>
    <property type="gene ID" value="AFUA_5G02655"/>
</dbReference>
<dbReference type="GeneID" id="5077152"/>
<dbReference type="KEGG" id="afm:AFUA_5G02655"/>
<dbReference type="VEuPathDB" id="FungiDB:Afu5g02655"/>
<dbReference type="eggNOG" id="ENOG502RNU7">
    <property type="taxonomic scope" value="Eukaryota"/>
</dbReference>
<dbReference type="HOGENOM" id="CLU_075842_0_0_1"/>
<dbReference type="InParanoid" id="A4DA05"/>
<dbReference type="OMA" id="YYIATEA"/>
<dbReference type="OrthoDB" id="4496773at2759"/>
<dbReference type="Proteomes" id="UP000002530">
    <property type="component" value="Chromosome 5"/>
</dbReference>
<dbReference type="GO" id="GO:0005634">
    <property type="term" value="C:nucleus"/>
    <property type="evidence" value="ECO:0007669"/>
    <property type="project" value="UniProtKB-SubCell"/>
</dbReference>
<dbReference type="GO" id="GO:0003677">
    <property type="term" value="F:DNA binding"/>
    <property type="evidence" value="ECO:0007669"/>
    <property type="project" value="UniProtKB-KW"/>
</dbReference>
<dbReference type="GO" id="GO:0003700">
    <property type="term" value="F:DNA-binding transcription factor activity"/>
    <property type="evidence" value="ECO:0007669"/>
    <property type="project" value="InterPro"/>
</dbReference>
<dbReference type="CDD" id="cd14688">
    <property type="entry name" value="bZIP_YAP"/>
    <property type="match status" value="1"/>
</dbReference>
<dbReference type="InterPro" id="IPR004827">
    <property type="entry name" value="bZIP"/>
</dbReference>
<dbReference type="InterPro" id="IPR046347">
    <property type="entry name" value="bZIP_sf"/>
</dbReference>
<dbReference type="InterPro" id="IPR052635">
    <property type="entry name" value="Sec_Metab_Biosynth_Reg"/>
</dbReference>
<dbReference type="PANTHER" id="PTHR39607:SF3">
    <property type="entry name" value="BZIP DOMAIN-CONTAINING PROTEIN"/>
    <property type="match status" value="1"/>
</dbReference>
<dbReference type="PANTHER" id="PTHR39607">
    <property type="entry name" value="XANTHOCILLIN BIOSYNTHESIS CLUSTER TRANSCRIPTION FACTOR XANC-RELATED"/>
    <property type="match status" value="1"/>
</dbReference>
<dbReference type="SUPFAM" id="SSF57959">
    <property type="entry name" value="Leucine zipper domain"/>
    <property type="match status" value="1"/>
</dbReference>
<dbReference type="PROSITE" id="PS00036">
    <property type="entry name" value="BZIP_BASIC"/>
    <property type="match status" value="1"/>
</dbReference>
<evidence type="ECO:0000255" key="1">
    <source>
        <dbReference type="PROSITE-ProRule" id="PRU00978"/>
    </source>
</evidence>
<evidence type="ECO:0000256" key="2">
    <source>
        <dbReference type="SAM" id="MobiDB-lite"/>
    </source>
</evidence>
<evidence type="ECO:0000269" key="3">
    <source>
    </source>
</evidence>
<evidence type="ECO:0000303" key="4">
    <source>
    </source>
</evidence>
<evidence type="ECO:0000305" key="5"/>